<comment type="subcellular location">
    <subcellularLocation>
        <location evidence="2">Secreted</location>
    </subcellularLocation>
</comment>
<comment type="tissue specificity">
    <text evidence="5">Expressed by the venom duct.</text>
</comment>
<comment type="domain">
    <text evidence="4">The cysteine framework is C-C.</text>
</comment>
<comment type="PTM">
    <text evidence="4">Contains 2 disulfide bonds.</text>
</comment>
<comment type="mass spectrometry"/>
<comment type="similarity">
    <text evidence="4">Belongs to the conotoxin L superfamily.</text>
</comment>
<name>CLEA_CONBY</name>
<evidence type="ECO:0000255" key="1"/>
<evidence type="ECO:0000269" key="2">
    <source>
    </source>
</evidence>
<evidence type="ECO:0000303" key="3">
    <source>
    </source>
</evidence>
<evidence type="ECO:0000305" key="4"/>
<evidence type="ECO:0000305" key="5">
    <source>
    </source>
</evidence>
<protein>
    <recommendedName>
        <fullName evidence="3">Conotoxin ba14a</fullName>
    </recommendedName>
    <alternativeName>
        <fullName evidence="4">Conotoxin ba14.1</fullName>
    </alternativeName>
</protein>
<proteinExistence type="evidence at protein level"/>
<keyword id="KW-1015">Disulfide bond</keyword>
<keyword id="KW-0964">Secreted</keyword>
<keyword id="KW-0732">Signal</keyword>
<keyword id="KW-0800">Toxin</keyword>
<dbReference type="SMR" id="P0DTJ7"/>
<dbReference type="GO" id="GO:0005576">
    <property type="term" value="C:extracellular region"/>
    <property type="evidence" value="ECO:0007669"/>
    <property type="project" value="UniProtKB-SubCell"/>
</dbReference>
<dbReference type="GO" id="GO:0090729">
    <property type="term" value="F:toxin activity"/>
    <property type="evidence" value="ECO:0007669"/>
    <property type="project" value="UniProtKB-KW"/>
</dbReference>
<accession>P0DTJ7</accession>
<reference key="1">
    <citation type="journal article" date="2021" name="Mar. Drugs">
        <title>Diversity of Conopeptides and Conoenzymes from the Venom Duct of the Marine Cone Snail Conus bayani as Determined from Transcriptomic and Proteomic Analyses.</title>
        <authorList>
            <person name="Rajaian Pushpabai R."/>
            <person name="Wilson Alphonse C.R."/>
            <person name="Mani R."/>
            <person name="Arun Apte D."/>
            <person name="Franklin J.B."/>
        </authorList>
    </citation>
    <scope>NUCLEOTIDE SEQUENCE [MRNA]</scope>
    <scope>MASS SPECTROMETRY</scope>
    <scope>SUBCELLULAR LOCATION</scope>
    <source>
        <tissue>Venom</tissue>
        <tissue>Venom duct</tissue>
    </source>
</reference>
<sequence>MKLSVMFIVALVLSLSMTDGLPRRAENGGRIFRQHSPDSMDPQTRQIKTRTLCPEHCTNGCNMDMTCI</sequence>
<organism>
    <name type="scientific">Conus bayani</name>
    <name type="common">Bayan's cone</name>
    <name type="synonym">Stellaconus bayani</name>
    <dbReference type="NCBI Taxonomy" id="2070216"/>
    <lineage>
        <taxon>Eukaryota</taxon>
        <taxon>Metazoa</taxon>
        <taxon>Spiralia</taxon>
        <taxon>Lophotrochozoa</taxon>
        <taxon>Mollusca</taxon>
        <taxon>Gastropoda</taxon>
        <taxon>Caenogastropoda</taxon>
        <taxon>Neogastropoda</taxon>
        <taxon>Conoidea</taxon>
        <taxon>Conidae</taxon>
        <taxon>Conus</taxon>
        <taxon>Splinoconus</taxon>
    </lineage>
</organism>
<feature type="signal peptide" evidence="1">
    <location>
        <begin position="1"/>
        <end position="20"/>
    </location>
</feature>
<feature type="propeptide" id="PRO_0000454992" evidence="5">
    <location>
        <begin position="21"/>
        <end position="50"/>
    </location>
</feature>
<feature type="peptide" id="PRO_0000454993" description="Conotoxin ba14a" evidence="2">
    <location>
        <begin position="51"/>
        <end position="68"/>
    </location>
</feature>